<evidence type="ECO:0000255" key="1">
    <source>
        <dbReference type="HAMAP-Rule" id="MF_00607"/>
    </source>
</evidence>
<gene>
    <name evidence="1" type="primary">rsmA</name>
    <name evidence="1" type="synonym">ksgA</name>
    <name type="ordered locus">SAUSA300_0470</name>
</gene>
<protein>
    <recommendedName>
        <fullName evidence="1">Ribosomal RNA small subunit methyltransferase A</fullName>
        <ecNumber evidence="1">2.1.1.182</ecNumber>
    </recommendedName>
    <alternativeName>
        <fullName evidence="1">16S rRNA (adenine(1518)-N(6)/adenine(1519)-N(6))-dimethyltransferase</fullName>
    </alternativeName>
    <alternativeName>
        <fullName evidence="1">16S rRNA dimethyladenosine transferase</fullName>
    </alternativeName>
    <alternativeName>
        <fullName evidence="1">16S rRNA dimethylase</fullName>
    </alternativeName>
    <alternativeName>
        <fullName evidence="1">S-adenosylmethionine-6-N', N'-adenosyl(rRNA) dimethyltransferase</fullName>
    </alternativeName>
</protein>
<name>RSMA_STAA3</name>
<keyword id="KW-0963">Cytoplasm</keyword>
<keyword id="KW-0489">Methyltransferase</keyword>
<keyword id="KW-0694">RNA-binding</keyword>
<keyword id="KW-0698">rRNA processing</keyword>
<keyword id="KW-0949">S-adenosyl-L-methionine</keyword>
<keyword id="KW-0808">Transferase</keyword>
<organism>
    <name type="scientific">Staphylococcus aureus (strain USA300)</name>
    <dbReference type="NCBI Taxonomy" id="367830"/>
    <lineage>
        <taxon>Bacteria</taxon>
        <taxon>Bacillati</taxon>
        <taxon>Bacillota</taxon>
        <taxon>Bacilli</taxon>
        <taxon>Bacillales</taxon>
        <taxon>Staphylococcaceae</taxon>
        <taxon>Staphylococcus</taxon>
    </lineage>
</organism>
<proteinExistence type="inferred from homology"/>
<comment type="function">
    <text evidence="1">Specifically dimethylates two adjacent adenosines (A1518 and A1519) in the loop of a conserved hairpin near the 3'-end of 16S rRNA in the 30S particle. May play a critical role in biogenesis of 30S subunits.</text>
</comment>
<comment type="catalytic activity">
    <reaction evidence="1">
        <text>adenosine(1518)/adenosine(1519) in 16S rRNA + 4 S-adenosyl-L-methionine = N(6)-dimethyladenosine(1518)/N(6)-dimethyladenosine(1519) in 16S rRNA + 4 S-adenosyl-L-homocysteine + 4 H(+)</text>
        <dbReference type="Rhea" id="RHEA:19609"/>
        <dbReference type="Rhea" id="RHEA-COMP:10232"/>
        <dbReference type="Rhea" id="RHEA-COMP:10233"/>
        <dbReference type="ChEBI" id="CHEBI:15378"/>
        <dbReference type="ChEBI" id="CHEBI:57856"/>
        <dbReference type="ChEBI" id="CHEBI:59789"/>
        <dbReference type="ChEBI" id="CHEBI:74411"/>
        <dbReference type="ChEBI" id="CHEBI:74493"/>
        <dbReference type="EC" id="2.1.1.182"/>
    </reaction>
</comment>
<comment type="subcellular location">
    <subcellularLocation>
        <location evidence="1">Cytoplasm</location>
    </subcellularLocation>
</comment>
<comment type="similarity">
    <text evidence="1">Belongs to the class I-like SAM-binding methyltransferase superfamily. rRNA adenine N(6)-methyltransferase family. RsmA subfamily.</text>
</comment>
<dbReference type="EC" id="2.1.1.182" evidence="1"/>
<dbReference type="EMBL" id="CP000255">
    <property type="protein sequence ID" value="ABD20962.1"/>
    <property type="molecule type" value="Genomic_DNA"/>
</dbReference>
<dbReference type="RefSeq" id="WP_000886500.1">
    <property type="nucleotide sequence ID" value="NZ_CP027476.1"/>
</dbReference>
<dbReference type="SMR" id="Q2FJE9"/>
<dbReference type="KEGG" id="saa:SAUSA300_0470"/>
<dbReference type="HOGENOM" id="CLU_041220_0_0_9"/>
<dbReference type="OMA" id="GMFQKEV"/>
<dbReference type="Proteomes" id="UP000001939">
    <property type="component" value="Chromosome"/>
</dbReference>
<dbReference type="GO" id="GO:0005829">
    <property type="term" value="C:cytosol"/>
    <property type="evidence" value="ECO:0007669"/>
    <property type="project" value="TreeGrafter"/>
</dbReference>
<dbReference type="GO" id="GO:0052908">
    <property type="term" value="F:16S rRNA (adenine(1518)-N(6)/adenine(1519)-N(6))-dimethyltransferase activity"/>
    <property type="evidence" value="ECO:0007669"/>
    <property type="project" value="UniProtKB-EC"/>
</dbReference>
<dbReference type="GO" id="GO:0003723">
    <property type="term" value="F:RNA binding"/>
    <property type="evidence" value="ECO:0007669"/>
    <property type="project" value="UniProtKB-KW"/>
</dbReference>
<dbReference type="CDD" id="cd02440">
    <property type="entry name" value="AdoMet_MTases"/>
    <property type="match status" value="1"/>
</dbReference>
<dbReference type="FunFam" id="1.10.8.100:FF:000002">
    <property type="entry name" value="Ribosomal RNA small subunit methyltransferase A"/>
    <property type="match status" value="1"/>
</dbReference>
<dbReference type="FunFam" id="3.40.50.150:FF:000023">
    <property type="entry name" value="Ribosomal RNA small subunit methyltransferase A"/>
    <property type="match status" value="1"/>
</dbReference>
<dbReference type="Gene3D" id="1.10.8.100">
    <property type="entry name" value="Ribosomal RNA adenine dimethylase-like, domain 2"/>
    <property type="match status" value="1"/>
</dbReference>
<dbReference type="Gene3D" id="3.40.50.150">
    <property type="entry name" value="Vaccinia Virus protein VP39"/>
    <property type="match status" value="1"/>
</dbReference>
<dbReference type="HAMAP" id="MF_00607">
    <property type="entry name" value="16SrRNA_methyltr_A"/>
    <property type="match status" value="1"/>
</dbReference>
<dbReference type="InterPro" id="IPR001737">
    <property type="entry name" value="KsgA/Erm"/>
</dbReference>
<dbReference type="InterPro" id="IPR023165">
    <property type="entry name" value="rRNA_Ade_diMease-like_C"/>
</dbReference>
<dbReference type="InterPro" id="IPR020596">
    <property type="entry name" value="rRNA_Ade_Mease_Trfase_CS"/>
</dbReference>
<dbReference type="InterPro" id="IPR020598">
    <property type="entry name" value="rRNA_Ade_methylase_Trfase_N"/>
</dbReference>
<dbReference type="InterPro" id="IPR011530">
    <property type="entry name" value="rRNA_adenine_dimethylase"/>
</dbReference>
<dbReference type="InterPro" id="IPR029063">
    <property type="entry name" value="SAM-dependent_MTases_sf"/>
</dbReference>
<dbReference type="NCBIfam" id="TIGR00755">
    <property type="entry name" value="ksgA"/>
    <property type="match status" value="1"/>
</dbReference>
<dbReference type="PANTHER" id="PTHR11727">
    <property type="entry name" value="DIMETHYLADENOSINE TRANSFERASE"/>
    <property type="match status" value="1"/>
</dbReference>
<dbReference type="PANTHER" id="PTHR11727:SF7">
    <property type="entry name" value="DIMETHYLADENOSINE TRANSFERASE-RELATED"/>
    <property type="match status" value="1"/>
</dbReference>
<dbReference type="Pfam" id="PF00398">
    <property type="entry name" value="RrnaAD"/>
    <property type="match status" value="1"/>
</dbReference>
<dbReference type="SMART" id="SM00650">
    <property type="entry name" value="rADc"/>
    <property type="match status" value="1"/>
</dbReference>
<dbReference type="SUPFAM" id="SSF53335">
    <property type="entry name" value="S-adenosyl-L-methionine-dependent methyltransferases"/>
    <property type="match status" value="1"/>
</dbReference>
<dbReference type="PROSITE" id="PS01131">
    <property type="entry name" value="RRNA_A_DIMETH"/>
    <property type="match status" value="1"/>
</dbReference>
<dbReference type="PROSITE" id="PS51689">
    <property type="entry name" value="SAM_RNA_A_N6_MT"/>
    <property type="match status" value="1"/>
</dbReference>
<sequence>MLDNKDIATPSRTRALLDKYGFNFKKSLGQNFLIDVNIINNIIDASDIDAQTGVIEIGPGMGSLTEQLARHAKRVLAFEIDQRLIPVLNDTLSPYDNVTVINEDILKANIKEAVENHLQDCEKIMVVANLPYYITTPILLNLMQQDIPIDGYVVMMQKEVGERLNAEVGSKAYGSLSIVVQYYTETSKVLTVPKSVFMPPPNVDSIVVKLMQRTEPLVTVDNEEAFFKLAKAAFAQRRKTINNNYQNYFKDGKQHKEVILQWLEQAGIDPRRRGETLSIQDFAKLYEEKKKFPQLEN</sequence>
<feature type="chain" id="PRO_0000257351" description="Ribosomal RNA small subunit methyltransferase A">
    <location>
        <begin position="1"/>
        <end position="297"/>
    </location>
</feature>
<feature type="binding site" evidence="1">
    <location>
        <position position="31"/>
    </location>
    <ligand>
        <name>S-adenosyl-L-methionine</name>
        <dbReference type="ChEBI" id="CHEBI:59789"/>
    </ligand>
</feature>
<feature type="binding site" evidence="1">
    <location>
        <position position="33"/>
    </location>
    <ligand>
        <name>S-adenosyl-L-methionine</name>
        <dbReference type="ChEBI" id="CHEBI:59789"/>
    </ligand>
</feature>
<feature type="binding site" evidence="1">
    <location>
        <position position="58"/>
    </location>
    <ligand>
        <name>S-adenosyl-L-methionine</name>
        <dbReference type="ChEBI" id="CHEBI:59789"/>
    </ligand>
</feature>
<feature type="binding site" evidence="1">
    <location>
        <position position="79"/>
    </location>
    <ligand>
        <name>S-adenosyl-L-methionine</name>
        <dbReference type="ChEBI" id="CHEBI:59789"/>
    </ligand>
</feature>
<feature type="binding site" evidence="1">
    <location>
        <position position="104"/>
    </location>
    <ligand>
        <name>S-adenosyl-L-methionine</name>
        <dbReference type="ChEBI" id="CHEBI:59789"/>
    </ligand>
</feature>
<feature type="binding site" evidence="1">
    <location>
        <position position="129"/>
    </location>
    <ligand>
        <name>S-adenosyl-L-methionine</name>
        <dbReference type="ChEBI" id="CHEBI:59789"/>
    </ligand>
</feature>
<reference key="1">
    <citation type="journal article" date="2006" name="Lancet">
        <title>Complete genome sequence of USA300, an epidemic clone of community-acquired meticillin-resistant Staphylococcus aureus.</title>
        <authorList>
            <person name="Diep B.A."/>
            <person name="Gill S.R."/>
            <person name="Chang R.F."/>
            <person name="Phan T.H."/>
            <person name="Chen J.H."/>
            <person name="Davidson M.G."/>
            <person name="Lin F."/>
            <person name="Lin J."/>
            <person name="Carleton H.A."/>
            <person name="Mongodin E.F."/>
            <person name="Sensabaugh G.F."/>
            <person name="Perdreau-Remington F."/>
        </authorList>
    </citation>
    <scope>NUCLEOTIDE SEQUENCE [LARGE SCALE GENOMIC DNA]</scope>
    <source>
        <strain>USA300</strain>
    </source>
</reference>
<accession>Q2FJE9</accession>